<evidence type="ECO:0000250" key="1"/>
<evidence type="ECO:0000255" key="2"/>
<evidence type="ECO:0000269" key="3">
    <source>
    </source>
</evidence>
<evidence type="ECO:0000269" key="4">
    <source>
    </source>
</evidence>
<evidence type="ECO:0000305" key="5"/>
<gene>
    <name type="primary">TIP1-1</name>
    <name type="synonym">TIP1</name>
</gene>
<name>TIP11_MAIZE</name>
<dbReference type="EMBL" id="AF037061">
    <property type="protein sequence ID" value="AAC09245.1"/>
    <property type="molecule type" value="mRNA"/>
</dbReference>
<dbReference type="EMBL" id="AY243803">
    <property type="protein sequence ID" value="AAO86709.1"/>
    <property type="molecule type" value="mRNA"/>
</dbReference>
<dbReference type="RefSeq" id="NP_001104896.1">
    <property type="nucleotide sequence ID" value="NM_001111426.1"/>
</dbReference>
<dbReference type="SMR" id="O64964"/>
<dbReference type="FunCoup" id="O64964">
    <property type="interactions" value="772"/>
</dbReference>
<dbReference type="STRING" id="4577.O64964"/>
<dbReference type="EnsemblPlants" id="Zm00001eb003730_T001">
    <property type="protein sequence ID" value="Zm00001eb003730_P001"/>
    <property type="gene ID" value="Zm00001eb003730"/>
</dbReference>
<dbReference type="GeneID" id="541675"/>
<dbReference type="Gramene" id="Zm00001eb003730_T001">
    <property type="protein sequence ID" value="Zm00001eb003730_P001"/>
    <property type="gene ID" value="Zm00001eb003730"/>
</dbReference>
<dbReference type="KEGG" id="zma:541675"/>
<dbReference type="MaizeGDB" id="319241"/>
<dbReference type="InParanoid" id="O64964"/>
<dbReference type="OMA" id="GPFHWIF"/>
<dbReference type="OrthoDB" id="3222at2759"/>
<dbReference type="Proteomes" id="UP000007305">
    <property type="component" value="Chromosome 1"/>
</dbReference>
<dbReference type="ExpressionAtlas" id="O64964">
    <property type="expression patterns" value="baseline and differential"/>
</dbReference>
<dbReference type="GO" id="GO:0016020">
    <property type="term" value="C:membrane"/>
    <property type="evidence" value="ECO:0000304"/>
    <property type="project" value="AgBase"/>
</dbReference>
<dbReference type="GO" id="GO:0009705">
    <property type="term" value="C:plant-type vacuole membrane"/>
    <property type="evidence" value="ECO:0000314"/>
    <property type="project" value="AgBase"/>
</dbReference>
<dbReference type="GO" id="GO:0015250">
    <property type="term" value="F:water channel activity"/>
    <property type="evidence" value="ECO:0000314"/>
    <property type="project" value="AgBase"/>
</dbReference>
<dbReference type="GO" id="GO:0048366">
    <property type="term" value="P:leaf development"/>
    <property type="evidence" value="ECO:0000270"/>
    <property type="project" value="AgBase"/>
</dbReference>
<dbReference type="GO" id="GO:0009826">
    <property type="term" value="P:unidimensional cell growth"/>
    <property type="evidence" value="ECO:0000270"/>
    <property type="project" value="AgBase"/>
</dbReference>
<dbReference type="GO" id="GO:0007033">
    <property type="term" value="P:vacuole organization"/>
    <property type="evidence" value="ECO:0000304"/>
    <property type="project" value="AgBase"/>
</dbReference>
<dbReference type="GO" id="GO:0006833">
    <property type="term" value="P:water transport"/>
    <property type="evidence" value="ECO:0000315"/>
    <property type="project" value="AgBase"/>
</dbReference>
<dbReference type="CDD" id="cd00333">
    <property type="entry name" value="MIP"/>
    <property type="match status" value="1"/>
</dbReference>
<dbReference type="FunFam" id="1.20.1080.10:FF:000002">
    <property type="entry name" value="Probable aquaporin TIP1-1"/>
    <property type="match status" value="1"/>
</dbReference>
<dbReference type="Gene3D" id="1.20.1080.10">
    <property type="entry name" value="Glycerol uptake facilitator protein"/>
    <property type="match status" value="1"/>
</dbReference>
<dbReference type="InterPro" id="IPR023271">
    <property type="entry name" value="Aquaporin-like"/>
</dbReference>
<dbReference type="InterPro" id="IPR034294">
    <property type="entry name" value="Aquaporin_transptr"/>
</dbReference>
<dbReference type="InterPro" id="IPR000425">
    <property type="entry name" value="MIP"/>
</dbReference>
<dbReference type="InterPro" id="IPR022357">
    <property type="entry name" value="MIP_CS"/>
</dbReference>
<dbReference type="PANTHER" id="PTHR45665:SF54">
    <property type="entry name" value="AQUAPORIN TIP1-1"/>
    <property type="match status" value="1"/>
</dbReference>
<dbReference type="PANTHER" id="PTHR45665">
    <property type="entry name" value="AQUAPORIN-8"/>
    <property type="match status" value="1"/>
</dbReference>
<dbReference type="Pfam" id="PF00230">
    <property type="entry name" value="MIP"/>
    <property type="match status" value="1"/>
</dbReference>
<dbReference type="PRINTS" id="PR00783">
    <property type="entry name" value="MINTRINSICP"/>
</dbReference>
<dbReference type="SUPFAM" id="SSF81338">
    <property type="entry name" value="Aquaporin-like"/>
    <property type="match status" value="1"/>
</dbReference>
<dbReference type="PROSITE" id="PS00221">
    <property type="entry name" value="MIP"/>
    <property type="match status" value="1"/>
</dbReference>
<sequence length="250" mass="25821">MPINRIALGSHQEVYHPGALKAAFAEFISTLIFVFAGQGSGMAFSKLTGGGPTTPAGLIAAAVAHAFALFVAVSVGANISGGHVNPAVTFGAFVGGNITLFRGLLYWVAQLLGSTVACFLLRFSTGGQATGTFGLTGVSVWEALVLEIVMTFGLVYTVYATAVDPKKGSLGTIAPIAIGFIVGANILVGGAFDGASMNPAVSFGPALVSWEWGYQWVYWVGPLIGGGLAGVIYELLFISHTHEQLPSTDY</sequence>
<proteinExistence type="evidence at transcript level"/>
<accession>O64964</accession>
<keyword id="KW-0472">Membrane</keyword>
<keyword id="KW-1185">Reference proteome</keyword>
<keyword id="KW-0677">Repeat</keyword>
<keyword id="KW-0812">Transmembrane</keyword>
<keyword id="KW-1133">Transmembrane helix</keyword>
<keyword id="KW-0813">Transport</keyword>
<keyword id="KW-0926">Vacuole</keyword>
<comment type="function">
    <text evidence="3">Water channel required to facilitate the transport of water across cell membrane. May support the rapid influx of water into vacuoles during cell expansion, permit osmotic equilibration between the cytosol and the vacuolar content and rapid transcellular water flow through living cells. Its function is impaired by Hg(2+).</text>
</comment>
<comment type="subcellular location">
    <subcellularLocation>
        <location evidence="3">Vacuole membrane</location>
        <topology evidence="3">Multi-pass membrane protein</topology>
    </subcellularLocation>
    <text>Tonoplast.</text>
</comment>
<comment type="tissue specificity">
    <text evidence="3 4">Expressed in roots, shoots, leaves, tassels, ears and embryos. Expressed in meristems and zones of cell enlargement: tips of primary and lateral roots, leaf primordia, and male and female inflorescence meristems. Highly expressed in the root epidermis and endodermis, parenchyma cells surrounding mature xylem vessels in the root and the stem, phloem companion cells and a ring of cells around the phloem strand in the stem and the leaf sheath, and the basal endosperm transfer cells in developing kernels.</text>
</comment>
<comment type="domain">
    <text>Aquaporins contain two tandem repeats each containing three membrane-spanning domains and a pore-forming loop with the signature motif Asn-Pro-Ala (NPA).</text>
</comment>
<comment type="similarity">
    <text evidence="5">Belongs to the MIP/aquaporin (TC 1.A.8) family. TIP (TC 1.A.8.10) subfamily.</text>
</comment>
<organism>
    <name type="scientific">Zea mays</name>
    <name type="common">Maize</name>
    <dbReference type="NCBI Taxonomy" id="4577"/>
    <lineage>
        <taxon>Eukaryota</taxon>
        <taxon>Viridiplantae</taxon>
        <taxon>Streptophyta</taxon>
        <taxon>Embryophyta</taxon>
        <taxon>Tracheophyta</taxon>
        <taxon>Spermatophyta</taxon>
        <taxon>Magnoliopsida</taxon>
        <taxon>Liliopsida</taxon>
        <taxon>Poales</taxon>
        <taxon>Poaceae</taxon>
        <taxon>PACMAD clade</taxon>
        <taxon>Panicoideae</taxon>
        <taxon>Andropogonodae</taxon>
        <taxon>Andropogoneae</taxon>
        <taxon>Tripsacinae</taxon>
        <taxon>Zea</taxon>
    </lineage>
</organism>
<protein>
    <recommendedName>
        <fullName>Aquaporin TIP1-1</fullName>
    </recommendedName>
    <alternativeName>
        <fullName>Tonoplast intrinsic protein 1-1</fullName>
    </alternativeName>
    <alternativeName>
        <fullName>ZmTIP1-1</fullName>
    </alternativeName>
    <alternativeName>
        <fullName>ZmTIP1;1</fullName>
        <shortName>ZmTIP1</shortName>
    </alternativeName>
</protein>
<reference key="1">
    <citation type="journal article" date="1998" name="Plant Physiol.">
        <title>Characterization of a maize tonoplast aquaporin expressed in zones of cell division and elongation.</title>
        <authorList>
            <person name="Chaumont F."/>
            <person name="Barrieu F."/>
            <person name="Herman E.M."/>
            <person name="Chrispeels M.J."/>
        </authorList>
    </citation>
    <scope>NUCLEOTIDE SEQUENCE [MRNA]</scope>
    <scope>FUNCTION</scope>
    <scope>SUBCELLULAR LOCATION</scope>
    <scope>TISSUE SPECIFICITY</scope>
    <source>
        <strain>cv. Ohio 43</strain>
        <tissue>Seed</tissue>
    </source>
</reference>
<reference key="2">
    <citation type="journal article" date="2003" name="Plant Cell Physiol.">
        <title>Diurnal regulation of water transport and aquaporin gene expression in maize roots: contribution of PIP2 proteins.</title>
        <authorList>
            <person name="Lopez F."/>
            <person name="Bousser A."/>
            <person name="Sissoeff I."/>
            <person name="Gaspar M."/>
            <person name="Lachaise B."/>
            <person name="Hoarau J."/>
            <person name="Mahe A."/>
        </authorList>
    </citation>
    <scope>NUCLEOTIDE SEQUENCE [MRNA]</scope>
    <source>
        <tissue>Root</tissue>
    </source>
</reference>
<reference key="3">
    <citation type="journal article" date="1998" name="Plant Physiol.">
        <title>High expression of the tonoplast aquaporin ZmTIP1 in epidermal and conducting tissues of maize.</title>
        <authorList>
            <person name="Barrieu F."/>
            <person name="Chaumont F."/>
            <person name="Chrispeels M.J."/>
        </authorList>
    </citation>
    <scope>TISSUE SPECIFICITY</scope>
</reference>
<reference key="4">
    <citation type="journal article" date="2001" name="Plant Physiol.">
        <title>Aquaporins constitute a large and highly divergent protein family in maize.</title>
        <authorList>
            <person name="Chaumont F."/>
            <person name="Barrieu F."/>
            <person name="Wojcik E."/>
            <person name="Chrispeels M.J."/>
            <person name="Jung R."/>
        </authorList>
    </citation>
    <scope>GENE FAMILY</scope>
    <scope>NOMENCLATURE</scope>
</reference>
<feature type="chain" id="PRO_0000286001" description="Aquaporin TIP1-1">
    <location>
        <begin position="1"/>
        <end position="250"/>
    </location>
</feature>
<feature type="transmembrane region" description="Helical; Name=1" evidence="2">
    <location>
        <begin position="24"/>
        <end position="44"/>
    </location>
</feature>
<feature type="transmembrane region" description="Helical; Name=2" evidence="2">
    <location>
        <begin position="56"/>
        <end position="76"/>
    </location>
</feature>
<feature type="transmembrane region" description="Helical; Name=3" evidence="2">
    <location>
        <begin position="104"/>
        <end position="126"/>
    </location>
</feature>
<feature type="transmembrane region" description="Helical; Name=4" evidence="2">
    <location>
        <begin position="143"/>
        <end position="163"/>
    </location>
</feature>
<feature type="transmembrane region" description="Helical; Name=5" evidence="2">
    <location>
        <begin position="172"/>
        <end position="192"/>
    </location>
</feature>
<feature type="transmembrane region" description="Helical; Name=6" evidence="2">
    <location>
        <begin position="218"/>
        <end position="238"/>
    </location>
</feature>
<feature type="short sequence motif" description="NPA 1" evidence="1">
    <location>
        <begin position="85"/>
        <end position="87"/>
    </location>
</feature>
<feature type="short sequence motif" description="NPA 2" evidence="1">
    <location>
        <begin position="198"/>
        <end position="200"/>
    </location>
</feature>